<reference key="1">
    <citation type="journal article" date="2005" name="Nature">
        <title>The genome sequence of the rice blast fungus Magnaporthe grisea.</title>
        <authorList>
            <person name="Dean R.A."/>
            <person name="Talbot N.J."/>
            <person name="Ebbole D.J."/>
            <person name="Farman M.L."/>
            <person name="Mitchell T.K."/>
            <person name="Orbach M.J."/>
            <person name="Thon M.R."/>
            <person name="Kulkarni R."/>
            <person name="Xu J.-R."/>
            <person name="Pan H."/>
            <person name="Read N.D."/>
            <person name="Lee Y.-H."/>
            <person name="Carbone I."/>
            <person name="Brown D."/>
            <person name="Oh Y.Y."/>
            <person name="Donofrio N."/>
            <person name="Jeong J.S."/>
            <person name="Soanes D.M."/>
            <person name="Djonovic S."/>
            <person name="Kolomiets E."/>
            <person name="Rehmeyer C."/>
            <person name="Li W."/>
            <person name="Harding M."/>
            <person name="Kim S."/>
            <person name="Lebrun M.-H."/>
            <person name="Bohnert H."/>
            <person name="Coughlan S."/>
            <person name="Butler J."/>
            <person name="Calvo S.E."/>
            <person name="Ma L.-J."/>
            <person name="Nicol R."/>
            <person name="Purcell S."/>
            <person name="Nusbaum C."/>
            <person name="Galagan J.E."/>
            <person name="Birren B.W."/>
        </authorList>
    </citation>
    <scope>NUCLEOTIDE SEQUENCE [LARGE SCALE GENOMIC DNA]</scope>
    <source>
        <strain>70-15 / ATCC MYA-4617 / FGSC 8958</strain>
    </source>
</reference>
<sequence length="443" mass="48792">MRQFEDYVLESFDHTTGWYQDNSYESLNRTADQLMQFRLPTGLKLSFSSLATPNFSTSYHLGAGGRFDGSICYLFSSVPLKNVVSSSESIPLTALLRSYRQVQDLPPFQPSHGAVPPAPTPTPGERLQEFVKQPWLVFGRMFLPESMLEAQVVKRASPNLRFQVKGVSQADLPNGGTILGSVQYTKPRYGVAGLLSTDGGLLGFRGLYNFGGDTTPTTSSPRAVGGDENGGANGCDERERIYGRFSAGGELYYGVLNKSAGASLGVRFATLPAHSGTPLTATFTLAPLMGNISSSFAVMARQSCSLATRFDFNVYSYESDWTIGMELWGKGRMAGLIDRRLEEEEAQIVPVDMGPAEKKRERSFQAKMEWRLDEDDETEPPLPNKREEEFSGVLKARMDQHSKVGLLWEGRLKSLIFSLGTSVNLSKPEQSFRSLGLAIQYSS</sequence>
<organism>
    <name type="scientific">Pyricularia oryzae (strain 70-15 / ATCC MYA-4617 / FGSC 8958)</name>
    <name type="common">Rice blast fungus</name>
    <name type="synonym">Magnaporthe oryzae</name>
    <dbReference type="NCBI Taxonomy" id="242507"/>
    <lineage>
        <taxon>Eukaryota</taxon>
        <taxon>Fungi</taxon>
        <taxon>Dikarya</taxon>
        <taxon>Ascomycota</taxon>
        <taxon>Pezizomycotina</taxon>
        <taxon>Sordariomycetes</taxon>
        <taxon>Sordariomycetidae</taxon>
        <taxon>Magnaporthales</taxon>
        <taxon>Pyriculariaceae</taxon>
        <taxon>Pyricularia</taxon>
    </lineage>
</organism>
<feature type="chain" id="PRO_0000384184" description="Mitochondrial distribution and morphology protein 10">
    <location>
        <begin position="1"/>
        <end position="443"/>
    </location>
</feature>
<protein>
    <recommendedName>
        <fullName evidence="1">Mitochondrial distribution and morphology protein 10</fullName>
    </recommendedName>
    <alternativeName>
        <fullName evidence="1">Mitochondrial inheritance component MDM10</fullName>
    </alternativeName>
</protein>
<dbReference type="EMBL" id="CM001233">
    <property type="protein sequence ID" value="EHA52763.1"/>
    <property type="molecule type" value="Genomic_DNA"/>
</dbReference>
<dbReference type="RefSeq" id="XP_003712570.1">
    <property type="nucleotide sequence ID" value="XM_003712522.1"/>
</dbReference>
<dbReference type="SMR" id="A4QTI8"/>
<dbReference type="FunCoup" id="A4QTI8">
    <property type="interactions" value="55"/>
</dbReference>
<dbReference type="STRING" id="242507.A4QTI8"/>
<dbReference type="EnsemblFungi" id="MGG_05057T0">
    <property type="protein sequence ID" value="MGG_05057T0"/>
    <property type="gene ID" value="MGG_05057"/>
</dbReference>
<dbReference type="GeneID" id="2675494"/>
<dbReference type="KEGG" id="mgr:MGG_05057"/>
<dbReference type="VEuPathDB" id="FungiDB:MGG_05057"/>
<dbReference type="eggNOG" id="ENOG502QUN5">
    <property type="taxonomic scope" value="Eukaryota"/>
</dbReference>
<dbReference type="HOGENOM" id="CLU_026505_1_0_1"/>
<dbReference type="InParanoid" id="A4QTI8"/>
<dbReference type="OMA" id="VPGYRQI"/>
<dbReference type="OrthoDB" id="2103793at2759"/>
<dbReference type="Proteomes" id="UP000009058">
    <property type="component" value="Chromosome 3"/>
</dbReference>
<dbReference type="GO" id="GO:0032865">
    <property type="term" value="C:ERMES complex"/>
    <property type="evidence" value="ECO:0007669"/>
    <property type="project" value="UniProtKB-UniRule"/>
</dbReference>
<dbReference type="GO" id="GO:0001401">
    <property type="term" value="C:SAM complex"/>
    <property type="evidence" value="ECO:0007669"/>
    <property type="project" value="TreeGrafter"/>
</dbReference>
<dbReference type="GO" id="GO:0051654">
    <property type="term" value="P:establishment of mitochondrion localization"/>
    <property type="evidence" value="ECO:0007669"/>
    <property type="project" value="TreeGrafter"/>
</dbReference>
<dbReference type="GO" id="GO:0000002">
    <property type="term" value="P:mitochondrial genome maintenance"/>
    <property type="evidence" value="ECO:0007669"/>
    <property type="project" value="UniProtKB-UniRule"/>
</dbReference>
<dbReference type="GO" id="GO:0070096">
    <property type="term" value="P:mitochondrial outer membrane translocase complex assembly"/>
    <property type="evidence" value="ECO:0007669"/>
    <property type="project" value="UniProtKB-UniRule"/>
</dbReference>
<dbReference type="GO" id="GO:1990456">
    <property type="term" value="P:mitochondrion-endoplasmic reticulum membrane tethering"/>
    <property type="evidence" value="ECO:0007669"/>
    <property type="project" value="UniProtKB-UniRule"/>
</dbReference>
<dbReference type="GO" id="GO:0015914">
    <property type="term" value="P:phospholipid transport"/>
    <property type="evidence" value="ECO:0007669"/>
    <property type="project" value="TreeGrafter"/>
</dbReference>
<dbReference type="GO" id="GO:0045040">
    <property type="term" value="P:protein insertion into mitochondrial outer membrane"/>
    <property type="evidence" value="ECO:0007669"/>
    <property type="project" value="UniProtKB-UniRule"/>
</dbReference>
<dbReference type="HAMAP" id="MF_03102">
    <property type="entry name" value="Mdm10"/>
    <property type="match status" value="1"/>
</dbReference>
<dbReference type="InterPro" id="IPR027539">
    <property type="entry name" value="Mdm10"/>
</dbReference>
<dbReference type="PANTHER" id="PTHR28035">
    <property type="entry name" value="MITOCHONDRIAL DISTRIBUTION AND MORPHOLOGY PROTEIN 10"/>
    <property type="match status" value="1"/>
</dbReference>
<dbReference type="PANTHER" id="PTHR28035:SF1">
    <property type="entry name" value="MITOCHONDRIAL DISTRIBUTION AND MORPHOLOGY PROTEIN 10"/>
    <property type="match status" value="1"/>
</dbReference>
<dbReference type="Pfam" id="PF12519">
    <property type="entry name" value="MDM10"/>
    <property type="match status" value="1"/>
</dbReference>
<proteinExistence type="inferred from homology"/>
<name>MDM10_PYRO7</name>
<keyword id="KW-0472">Membrane</keyword>
<keyword id="KW-0496">Mitochondrion</keyword>
<keyword id="KW-1000">Mitochondrion outer membrane</keyword>
<keyword id="KW-1185">Reference proteome</keyword>
<keyword id="KW-0812">Transmembrane</keyword>
<keyword id="KW-1134">Transmembrane beta strand</keyword>
<evidence type="ECO:0000255" key="1">
    <source>
        <dbReference type="HAMAP-Rule" id="MF_03102"/>
    </source>
</evidence>
<comment type="function">
    <text evidence="1">Component of the ERMES/MDM complex, which serves as a molecular tether to connect the endoplasmic reticulum and mitochondria. Components of this complex are involved in the control of mitochondrial shape and protein biogenesis and may function in phospholipid exchange. MDM10 is involved in the late assembly steps of the general translocase of the mitochondrial outer membrane (TOM complex). Functions in the TOM40-specific route of the assembly of outer membrane beta-barrel proteins, including the association of TOM40 with the receptor TOM22 and small TOM proteins. Can associate with the SAM(core) complex as well as the MDM12-MMM1 complex, both involved in late steps of the major beta-barrel assembly pathway, that is responsible for biogenesis of all outer membrane beta-barrel proteins. May act as a switch that shuttles between both complexes and channels precursor proteins into the TOM40-specific pathway. Plays a role in mitochondrial morphology and in the inheritance of mitochondria.</text>
</comment>
<comment type="subunit">
    <text evidence="1">Component of the ER-mitochondria encounter structure (ERMES) or MDM complex, composed of MMM1, MDM10, MDM12 and MDM34. Associates with the mitochondrial outer membrane sorting assembly machinery SAM(core) complex.</text>
</comment>
<comment type="subcellular location">
    <subcellularLocation>
        <location evidence="1">Mitochondrion outer membrane</location>
        <topology evidence="1">Multi-pass membrane protein</topology>
    </subcellularLocation>
    <text evidence="1">The ERMES/MDM complex localizes to a few discrete foci (around 10 per single cell), that represent mitochondria-endoplasmic reticulum junctions. These foci are often found next to mtDNA nucleoids.</text>
</comment>
<comment type="domain">
    <text>Lacks alpha-helical transmembrane segments, suggesting that it resides in the membrane via beta-sheet conformations similar to those predicted for other outer membrane proteins and porin.</text>
</comment>
<comment type="similarity">
    <text evidence="1">Belongs to the MDM10 family.</text>
</comment>
<accession>A4QTI8</accession>
<accession>G4N443</accession>
<gene>
    <name evidence="1" type="primary">MDM10</name>
    <name type="ORF">MGG_05057</name>
</gene>